<keyword id="KW-0068">Autocatalytic cleavage</keyword>
<keyword id="KW-0227">DNA damage</keyword>
<keyword id="KW-0234">DNA repair</keyword>
<keyword id="KW-0235">DNA replication</keyword>
<keyword id="KW-0238">DNA-binding</keyword>
<keyword id="KW-0378">Hydrolase</keyword>
<keyword id="KW-1185">Reference proteome</keyword>
<keyword id="KW-0678">Repressor</keyword>
<keyword id="KW-0742">SOS response</keyword>
<keyword id="KW-0804">Transcription</keyword>
<keyword id="KW-0805">Transcription regulation</keyword>
<organism>
    <name type="scientific">Idiomarina loihiensis (strain ATCC BAA-735 / DSM 15497 / L2-TR)</name>
    <dbReference type="NCBI Taxonomy" id="283942"/>
    <lineage>
        <taxon>Bacteria</taxon>
        <taxon>Pseudomonadati</taxon>
        <taxon>Pseudomonadota</taxon>
        <taxon>Gammaproteobacteria</taxon>
        <taxon>Alteromonadales</taxon>
        <taxon>Idiomarinaceae</taxon>
        <taxon>Idiomarina</taxon>
    </lineage>
</organism>
<protein>
    <recommendedName>
        <fullName evidence="1">LexA repressor</fullName>
        <ecNumber evidence="1">3.4.21.88</ecNumber>
    </recommendedName>
</protein>
<proteinExistence type="inferred from homology"/>
<accession>Q5QUP5</accession>
<name>LEXA_IDILO</name>
<comment type="function">
    <text evidence="1">Represses a number of genes involved in the response to DNA damage (SOS response), including recA and lexA. In the presence of single-stranded DNA, RecA interacts with LexA causing an autocatalytic cleavage which disrupts the DNA-binding part of LexA, leading to derepression of the SOS regulon and eventually DNA repair.</text>
</comment>
<comment type="catalytic activity">
    <reaction evidence="1">
        <text>Hydrolysis of Ala-|-Gly bond in repressor LexA.</text>
        <dbReference type="EC" id="3.4.21.88"/>
    </reaction>
</comment>
<comment type="subunit">
    <text evidence="1">Homodimer.</text>
</comment>
<comment type="similarity">
    <text evidence="1">Belongs to the peptidase S24 family.</text>
</comment>
<dbReference type="EC" id="3.4.21.88" evidence="1"/>
<dbReference type="EMBL" id="AE017340">
    <property type="protein sequence ID" value="AAV81105.1"/>
    <property type="molecule type" value="Genomic_DNA"/>
</dbReference>
<dbReference type="RefSeq" id="WP_011233524.1">
    <property type="nucleotide sequence ID" value="NC_006512.1"/>
</dbReference>
<dbReference type="SMR" id="Q5QUP5"/>
<dbReference type="STRING" id="283942.IL0262"/>
<dbReference type="MEROPS" id="S24.001"/>
<dbReference type="GeneID" id="41335409"/>
<dbReference type="KEGG" id="ilo:IL0262"/>
<dbReference type="eggNOG" id="COG1974">
    <property type="taxonomic scope" value="Bacteria"/>
</dbReference>
<dbReference type="HOGENOM" id="CLU_066192_45_3_6"/>
<dbReference type="OrthoDB" id="9802364at2"/>
<dbReference type="Proteomes" id="UP000001171">
    <property type="component" value="Chromosome"/>
</dbReference>
<dbReference type="GO" id="GO:0003677">
    <property type="term" value="F:DNA binding"/>
    <property type="evidence" value="ECO:0007669"/>
    <property type="project" value="UniProtKB-UniRule"/>
</dbReference>
<dbReference type="GO" id="GO:0004252">
    <property type="term" value="F:serine-type endopeptidase activity"/>
    <property type="evidence" value="ECO:0007669"/>
    <property type="project" value="UniProtKB-UniRule"/>
</dbReference>
<dbReference type="GO" id="GO:0006281">
    <property type="term" value="P:DNA repair"/>
    <property type="evidence" value="ECO:0007669"/>
    <property type="project" value="UniProtKB-UniRule"/>
</dbReference>
<dbReference type="GO" id="GO:0006260">
    <property type="term" value="P:DNA replication"/>
    <property type="evidence" value="ECO:0007669"/>
    <property type="project" value="UniProtKB-UniRule"/>
</dbReference>
<dbReference type="GO" id="GO:0045892">
    <property type="term" value="P:negative regulation of DNA-templated transcription"/>
    <property type="evidence" value="ECO:0007669"/>
    <property type="project" value="UniProtKB-UniRule"/>
</dbReference>
<dbReference type="GO" id="GO:0006508">
    <property type="term" value="P:proteolysis"/>
    <property type="evidence" value="ECO:0007669"/>
    <property type="project" value="InterPro"/>
</dbReference>
<dbReference type="GO" id="GO:0009432">
    <property type="term" value="P:SOS response"/>
    <property type="evidence" value="ECO:0007669"/>
    <property type="project" value="UniProtKB-UniRule"/>
</dbReference>
<dbReference type="CDD" id="cd06529">
    <property type="entry name" value="S24_LexA-like"/>
    <property type="match status" value="1"/>
</dbReference>
<dbReference type="FunFam" id="1.10.10.10:FF:000009">
    <property type="entry name" value="LexA repressor"/>
    <property type="match status" value="1"/>
</dbReference>
<dbReference type="FunFam" id="2.10.109.10:FF:000001">
    <property type="entry name" value="LexA repressor"/>
    <property type="match status" value="1"/>
</dbReference>
<dbReference type="Gene3D" id="2.10.109.10">
    <property type="entry name" value="Umud Fragment, subunit A"/>
    <property type="match status" value="1"/>
</dbReference>
<dbReference type="Gene3D" id="1.10.10.10">
    <property type="entry name" value="Winged helix-like DNA-binding domain superfamily/Winged helix DNA-binding domain"/>
    <property type="match status" value="1"/>
</dbReference>
<dbReference type="HAMAP" id="MF_00015">
    <property type="entry name" value="LexA"/>
    <property type="match status" value="1"/>
</dbReference>
<dbReference type="InterPro" id="IPR006200">
    <property type="entry name" value="LexA"/>
</dbReference>
<dbReference type="InterPro" id="IPR039418">
    <property type="entry name" value="LexA-like"/>
</dbReference>
<dbReference type="InterPro" id="IPR036286">
    <property type="entry name" value="LexA/Signal_pep-like_sf"/>
</dbReference>
<dbReference type="InterPro" id="IPR006199">
    <property type="entry name" value="LexA_DNA-bd_dom"/>
</dbReference>
<dbReference type="InterPro" id="IPR050077">
    <property type="entry name" value="LexA_repressor"/>
</dbReference>
<dbReference type="InterPro" id="IPR006197">
    <property type="entry name" value="Peptidase_S24_LexA"/>
</dbReference>
<dbReference type="InterPro" id="IPR015927">
    <property type="entry name" value="Peptidase_S24_S26A/B/C"/>
</dbReference>
<dbReference type="InterPro" id="IPR036388">
    <property type="entry name" value="WH-like_DNA-bd_sf"/>
</dbReference>
<dbReference type="InterPro" id="IPR036390">
    <property type="entry name" value="WH_DNA-bd_sf"/>
</dbReference>
<dbReference type="NCBIfam" id="TIGR00498">
    <property type="entry name" value="lexA"/>
    <property type="match status" value="1"/>
</dbReference>
<dbReference type="PANTHER" id="PTHR33516">
    <property type="entry name" value="LEXA REPRESSOR"/>
    <property type="match status" value="1"/>
</dbReference>
<dbReference type="PANTHER" id="PTHR33516:SF2">
    <property type="entry name" value="LEXA REPRESSOR-RELATED"/>
    <property type="match status" value="1"/>
</dbReference>
<dbReference type="Pfam" id="PF01726">
    <property type="entry name" value="LexA_DNA_bind"/>
    <property type="match status" value="1"/>
</dbReference>
<dbReference type="Pfam" id="PF00717">
    <property type="entry name" value="Peptidase_S24"/>
    <property type="match status" value="1"/>
</dbReference>
<dbReference type="PRINTS" id="PR00726">
    <property type="entry name" value="LEXASERPTASE"/>
</dbReference>
<dbReference type="SUPFAM" id="SSF51306">
    <property type="entry name" value="LexA/Signal peptidase"/>
    <property type="match status" value="1"/>
</dbReference>
<dbReference type="SUPFAM" id="SSF46785">
    <property type="entry name" value="Winged helix' DNA-binding domain"/>
    <property type="match status" value="1"/>
</dbReference>
<evidence type="ECO:0000255" key="1">
    <source>
        <dbReference type="HAMAP-Rule" id="MF_00015"/>
    </source>
</evidence>
<sequence>MRPLTPRQSEILELIKDNLHATGMPPTRAEIAHKLGFRSANSAEEHLKALARKGVIEILPGMSRGIRLVGDDYDIADGLPLIGQVAAGEPLLAEQHVEGHYKIDESLFHPAASFLLKVNGMSMRDIGILDGDLLAVHKTEQARNGQIVVARVEDEVTVKRFEQRGKTILLHPENEDFSTITVNLAEQVFAIEGLAVGVIRNGATL</sequence>
<gene>
    <name evidence="1" type="primary">lexA</name>
    <name type="ordered locus">IL0262</name>
</gene>
<reference key="1">
    <citation type="journal article" date="2004" name="Proc. Natl. Acad. Sci. U.S.A.">
        <title>Genome sequence of the deep-sea gamma-proteobacterium Idiomarina loihiensis reveals amino acid fermentation as a source of carbon and energy.</title>
        <authorList>
            <person name="Hou S."/>
            <person name="Saw J.H."/>
            <person name="Lee K.S."/>
            <person name="Freitas T.A."/>
            <person name="Belisle C."/>
            <person name="Kawarabayasi Y."/>
            <person name="Donachie S.P."/>
            <person name="Pikina A."/>
            <person name="Galperin M.Y."/>
            <person name="Koonin E.V."/>
            <person name="Makarova K.S."/>
            <person name="Omelchenko M.V."/>
            <person name="Sorokin A."/>
            <person name="Wolf Y.I."/>
            <person name="Li Q.X."/>
            <person name="Keum Y.S."/>
            <person name="Campbell S."/>
            <person name="Denery J."/>
            <person name="Aizawa S."/>
            <person name="Shibata S."/>
            <person name="Malahoff A."/>
            <person name="Alam M."/>
        </authorList>
    </citation>
    <scope>NUCLEOTIDE SEQUENCE [LARGE SCALE GENOMIC DNA]</scope>
    <source>
        <strain>ATCC BAA-735 / DSM 15497 / L2-TR</strain>
    </source>
</reference>
<feature type="chain" id="PRO_0000170044" description="LexA repressor">
    <location>
        <begin position="1"/>
        <end position="205"/>
    </location>
</feature>
<feature type="DNA-binding region" description="H-T-H motif" evidence="1">
    <location>
        <begin position="28"/>
        <end position="48"/>
    </location>
</feature>
<feature type="active site" description="For autocatalytic cleavage activity" evidence="1">
    <location>
        <position position="122"/>
    </location>
</feature>
<feature type="active site" description="For autocatalytic cleavage activity" evidence="1">
    <location>
        <position position="159"/>
    </location>
</feature>
<feature type="site" description="Cleavage; by autolysis" evidence="1">
    <location>
        <begin position="87"/>
        <end position="88"/>
    </location>
</feature>